<proteinExistence type="inferred from homology"/>
<organism>
    <name type="scientific">Christiangramia forsetii (strain DSM 17595 / CGMCC 1.15422 / KT0803)</name>
    <name type="common">Gramella forsetii</name>
    <dbReference type="NCBI Taxonomy" id="411154"/>
    <lineage>
        <taxon>Bacteria</taxon>
        <taxon>Pseudomonadati</taxon>
        <taxon>Bacteroidota</taxon>
        <taxon>Flavobacteriia</taxon>
        <taxon>Flavobacteriales</taxon>
        <taxon>Flavobacteriaceae</taxon>
        <taxon>Christiangramia</taxon>
    </lineage>
</organism>
<sequence length="598" mass="66544">MKNIRNFCIIAHIDHGKSTLADRLLDFTGAVTEREKQEQLLDSMDLERERGITIKSHAIQMDYVHEGEEFVLNLIDTPGHVDFSYEVSRSIAACEGALLVVDAAQSIQAQTISNLYLALENDLEIIPVLNKVDLPSANPEEVTDDIVDLLGCDPSEVIPASAKTGLGIKEILDAIINRVPAPSGKVDAPLRALIFDSVYNPFRGVETYFRVINGSIKKGEKIKFVATGKTYDADEVGTLRLKQFPRKEIKTGDVGYLITGIKDAREVKVGDTITSAVNPTTEAVAGFEDVKPMVFAGIYPVDTEDYEDLRSSMEKLQLNDASLVFLPESSAALGFGFRCGFLGMLHLEIIQERLEREFDMTVITTVPNVSYHAYTNKNPDDVILVNNPSDLPEPSSLNRVEEPFIKATIITKADYVGNVMGLCIEKRGEITNQTYLTTERVELTFDMPLAEIVFDFYDRLKTVSRGYASFDYTPIGLRESKLVKVDVLLNANIVDALSALLHVDNAYDIGKKMCEKLKELIPRQQFDIPIQAAIGAKIIARETVKALRKDVTAKCYGGDISRKRKLLEKQKKGKKRMRQVGNVEIPQEAFMAVLKLND</sequence>
<keyword id="KW-0997">Cell inner membrane</keyword>
<keyword id="KW-1003">Cell membrane</keyword>
<keyword id="KW-0342">GTP-binding</keyword>
<keyword id="KW-0378">Hydrolase</keyword>
<keyword id="KW-0472">Membrane</keyword>
<keyword id="KW-0547">Nucleotide-binding</keyword>
<keyword id="KW-0648">Protein biosynthesis</keyword>
<gene>
    <name evidence="1" type="primary">lepA</name>
    <name type="ordered locus">GFO_3325</name>
</gene>
<reference key="1">
    <citation type="journal article" date="2006" name="Environ. Microbiol.">
        <title>Whole genome analysis of the marine Bacteroidetes'Gramella forsetii' reveals adaptations to degradation of polymeric organic matter.</title>
        <authorList>
            <person name="Bauer M."/>
            <person name="Kube M."/>
            <person name="Teeling H."/>
            <person name="Richter M."/>
            <person name="Lombardot T."/>
            <person name="Allers E."/>
            <person name="Wuerdemann C.A."/>
            <person name="Quast C."/>
            <person name="Kuhl H."/>
            <person name="Knaust F."/>
            <person name="Woebken D."/>
            <person name="Bischof K."/>
            <person name="Mussmann M."/>
            <person name="Choudhuri J.V."/>
            <person name="Meyer F."/>
            <person name="Reinhardt R."/>
            <person name="Amann R.I."/>
            <person name="Gloeckner F.O."/>
        </authorList>
    </citation>
    <scope>NUCLEOTIDE SEQUENCE [LARGE SCALE GENOMIC DNA]</scope>
    <source>
        <strain>DSM 17595 / CGMCC 1.15422 / KT0803</strain>
    </source>
</reference>
<protein>
    <recommendedName>
        <fullName evidence="1">Elongation factor 4</fullName>
        <shortName evidence="1">EF-4</shortName>
        <ecNumber evidence="1">3.6.5.n1</ecNumber>
    </recommendedName>
    <alternativeName>
        <fullName evidence="1">Ribosomal back-translocase LepA</fullName>
    </alternativeName>
</protein>
<evidence type="ECO:0000255" key="1">
    <source>
        <dbReference type="HAMAP-Rule" id="MF_00071"/>
    </source>
</evidence>
<dbReference type="EC" id="3.6.5.n1" evidence="1"/>
<dbReference type="EMBL" id="CU207366">
    <property type="protein sequence ID" value="CAL68267.1"/>
    <property type="molecule type" value="Genomic_DNA"/>
</dbReference>
<dbReference type="RefSeq" id="WP_011711168.1">
    <property type="nucleotide sequence ID" value="NC_008571.1"/>
</dbReference>
<dbReference type="SMR" id="A0M6M2"/>
<dbReference type="STRING" id="411154.GFO_3325"/>
<dbReference type="KEGG" id="gfo:GFO_3325"/>
<dbReference type="eggNOG" id="COG0481">
    <property type="taxonomic scope" value="Bacteria"/>
</dbReference>
<dbReference type="HOGENOM" id="CLU_009995_3_3_10"/>
<dbReference type="OrthoDB" id="9801591at2"/>
<dbReference type="Proteomes" id="UP000000755">
    <property type="component" value="Chromosome"/>
</dbReference>
<dbReference type="GO" id="GO:0005886">
    <property type="term" value="C:plasma membrane"/>
    <property type="evidence" value="ECO:0007669"/>
    <property type="project" value="UniProtKB-SubCell"/>
</dbReference>
<dbReference type="GO" id="GO:0005525">
    <property type="term" value="F:GTP binding"/>
    <property type="evidence" value="ECO:0007669"/>
    <property type="project" value="UniProtKB-UniRule"/>
</dbReference>
<dbReference type="GO" id="GO:0003924">
    <property type="term" value="F:GTPase activity"/>
    <property type="evidence" value="ECO:0007669"/>
    <property type="project" value="UniProtKB-UniRule"/>
</dbReference>
<dbReference type="GO" id="GO:0043022">
    <property type="term" value="F:ribosome binding"/>
    <property type="evidence" value="ECO:0007669"/>
    <property type="project" value="UniProtKB-UniRule"/>
</dbReference>
<dbReference type="GO" id="GO:0003746">
    <property type="term" value="F:translation elongation factor activity"/>
    <property type="evidence" value="ECO:0007669"/>
    <property type="project" value="UniProtKB-UniRule"/>
</dbReference>
<dbReference type="GO" id="GO:0045727">
    <property type="term" value="P:positive regulation of translation"/>
    <property type="evidence" value="ECO:0007669"/>
    <property type="project" value="UniProtKB-UniRule"/>
</dbReference>
<dbReference type="CDD" id="cd03699">
    <property type="entry name" value="EF4_II"/>
    <property type="match status" value="1"/>
</dbReference>
<dbReference type="CDD" id="cd16260">
    <property type="entry name" value="EF4_III"/>
    <property type="match status" value="1"/>
</dbReference>
<dbReference type="CDD" id="cd01890">
    <property type="entry name" value="LepA"/>
    <property type="match status" value="1"/>
</dbReference>
<dbReference type="CDD" id="cd03709">
    <property type="entry name" value="lepA_C"/>
    <property type="match status" value="1"/>
</dbReference>
<dbReference type="FunFam" id="3.40.50.300:FF:000078">
    <property type="entry name" value="Elongation factor 4"/>
    <property type="match status" value="1"/>
</dbReference>
<dbReference type="FunFam" id="2.40.30.10:FF:000015">
    <property type="entry name" value="Translation factor GUF1, mitochondrial"/>
    <property type="match status" value="1"/>
</dbReference>
<dbReference type="FunFam" id="3.30.70.240:FF:000007">
    <property type="entry name" value="Translation factor GUF1, mitochondrial"/>
    <property type="match status" value="1"/>
</dbReference>
<dbReference type="FunFam" id="3.30.70.2570:FF:000001">
    <property type="entry name" value="Translation factor GUF1, mitochondrial"/>
    <property type="match status" value="1"/>
</dbReference>
<dbReference type="FunFam" id="3.30.70.870:FF:000004">
    <property type="entry name" value="Translation factor GUF1, mitochondrial"/>
    <property type="match status" value="1"/>
</dbReference>
<dbReference type="Gene3D" id="3.30.70.240">
    <property type="match status" value="1"/>
</dbReference>
<dbReference type="Gene3D" id="3.30.70.2570">
    <property type="entry name" value="Elongation factor 4, C-terminal domain"/>
    <property type="match status" value="1"/>
</dbReference>
<dbReference type="Gene3D" id="3.30.70.870">
    <property type="entry name" value="Elongation Factor G (Translational Gtpase), domain 3"/>
    <property type="match status" value="1"/>
</dbReference>
<dbReference type="Gene3D" id="3.40.50.300">
    <property type="entry name" value="P-loop containing nucleotide triphosphate hydrolases"/>
    <property type="match status" value="1"/>
</dbReference>
<dbReference type="Gene3D" id="2.40.30.10">
    <property type="entry name" value="Translation factors"/>
    <property type="match status" value="1"/>
</dbReference>
<dbReference type="HAMAP" id="MF_00071">
    <property type="entry name" value="LepA"/>
    <property type="match status" value="1"/>
</dbReference>
<dbReference type="InterPro" id="IPR006297">
    <property type="entry name" value="EF-4"/>
</dbReference>
<dbReference type="InterPro" id="IPR035647">
    <property type="entry name" value="EFG_III/V"/>
</dbReference>
<dbReference type="InterPro" id="IPR000640">
    <property type="entry name" value="EFG_V-like"/>
</dbReference>
<dbReference type="InterPro" id="IPR004161">
    <property type="entry name" value="EFTu-like_2"/>
</dbReference>
<dbReference type="InterPro" id="IPR038363">
    <property type="entry name" value="LepA_C_sf"/>
</dbReference>
<dbReference type="InterPro" id="IPR013842">
    <property type="entry name" value="LepA_CTD"/>
</dbReference>
<dbReference type="InterPro" id="IPR035654">
    <property type="entry name" value="LepA_IV"/>
</dbReference>
<dbReference type="InterPro" id="IPR027417">
    <property type="entry name" value="P-loop_NTPase"/>
</dbReference>
<dbReference type="InterPro" id="IPR005225">
    <property type="entry name" value="Small_GTP-bd"/>
</dbReference>
<dbReference type="InterPro" id="IPR000795">
    <property type="entry name" value="T_Tr_GTP-bd_dom"/>
</dbReference>
<dbReference type="InterPro" id="IPR009000">
    <property type="entry name" value="Transl_B-barrel_sf"/>
</dbReference>
<dbReference type="NCBIfam" id="TIGR01393">
    <property type="entry name" value="lepA"/>
    <property type="match status" value="1"/>
</dbReference>
<dbReference type="NCBIfam" id="TIGR00231">
    <property type="entry name" value="small_GTP"/>
    <property type="match status" value="1"/>
</dbReference>
<dbReference type="PANTHER" id="PTHR43512:SF4">
    <property type="entry name" value="TRANSLATION FACTOR GUF1 HOMOLOG, CHLOROPLASTIC"/>
    <property type="match status" value="1"/>
</dbReference>
<dbReference type="PANTHER" id="PTHR43512">
    <property type="entry name" value="TRANSLATION FACTOR GUF1-RELATED"/>
    <property type="match status" value="1"/>
</dbReference>
<dbReference type="Pfam" id="PF00679">
    <property type="entry name" value="EFG_C"/>
    <property type="match status" value="1"/>
</dbReference>
<dbReference type="Pfam" id="PF00009">
    <property type="entry name" value="GTP_EFTU"/>
    <property type="match status" value="1"/>
</dbReference>
<dbReference type="Pfam" id="PF03144">
    <property type="entry name" value="GTP_EFTU_D2"/>
    <property type="match status" value="1"/>
</dbReference>
<dbReference type="Pfam" id="PF06421">
    <property type="entry name" value="LepA_C"/>
    <property type="match status" value="1"/>
</dbReference>
<dbReference type="PRINTS" id="PR00315">
    <property type="entry name" value="ELONGATNFCT"/>
</dbReference>
<dbReference type="SUPFAM" id="SSF54980">
    <property type="entry name" value="EF-G C-terminal domain-like"/>
    <property type="match status" value="2"/>
</dbReference>
<dbReference type="SUPFAM" id="SSF52540">
    <property type="entry name" value="P-loop containing nucleoside triphosphate hydrolases"/>
    <property type="match status" value="1"/>
</dbReference>
<dbReference type="SUPFAM" id="SSF50447">
    <property type="entry name" value="Translation proteins"/>
    <property type="match status" value="1"/>
</dbReference>
<dbReference type="PROSITE" id="PS51722">
    <property type="entry name" value="G_TR_2"/>
    <property type="match status" value="1"/>
</dbReference>
<comment type="function">
    <text evidence="1">Required for accurate and efficient protein synthesis under certain stress conditions. May act as a fidelity factor of the translation reaction, by catalyzing a one-codon backward translocation of tRNAs on improperly translocated ribosomes. Back-translocation proceeds from a post-translocation (POST) complex to a pre-translocation (PRE) complex, thus giving elongation factor G a second chance to translocate the tRNAs correctly. Binds to ribosomes in a GTP-dependent manner.</text>
</comment>
<comment type="catalytic activity">
    <reaction evidence="1">
        <text>GTP + H2O = GDP + phosphate + H(+)</text>
        <dbReference type="Rhea" id="RHEA:19669"/>
        <dbReference type="ChEBI" id="CHEBI:15377"/>
        <dbReference type="ChEBI" id="CHEBI:15378"/>
        <dbReference type="ChEBI" id="CHEBI:37565"/>
        <dbReference type="ChEBI" id="CHEBI:43474"/>
        <dbReference type="ChEBI" id="CHEBI:58189"/>
        <dbReference type="EC" id="3.6.5.n1"/>
    </reaction>
</comment>
<comment type="subcellular location">
    <subcellularLocation>
        <location evidence="1">Cell inner membrane</location>
        <topology evidence="1">Peripheral membrane protein</topology>
        <orientation evidence="1">Cytoplasmic side</orientation>
    </subcellularLocation>
</comment>
<comment type="similarity">
    <text evidence="1">Belongs to the TRAFAC class translation factor GTPase superfamily. Classic translation factor GTPase family. LepA subfamily.</text>
</comment>
<feature type="chain" id="PRO_1000032001" description="Elongation factor 4">
    <location>
        <begin position="1"/>
        <end position="598"/>
    </location>
</feature>
<feature type="domain" description="tr-type G">
    <location>
        <begin position="2"/>
        <end position="183"/>
    </location>
</feature>
<feature type="binding site" evidence="1">
    <location>
        <begin position="14"/>
        <end position="19"/>
    </location>
    <ligand>
        <name>GTP</name>
        <dbReference type="ChEBI" id="CHEBI:37565"/>
    </ligand>
</feature>
<feature type="binding site" evidence="1">
    <location>
        <begin position="130"/>
        <end position="133"/>
    </location>
    <ligand>
        <name>GTP</name>
        <dbReference type="ChEBI" id="CHEBI:37565"/>
    </ligand>
</feature>
<name>LEPA_CHRFK</name>
<accession>A0M6M2</accession>